<keyword id="KW-0066">ATP synthesis</keyword>
<keyword id="KW-0375">Hydrogen ion transport</keyword>
<keyword id="KW-0406">Ion transport</keyword>
<keyword id="KW-1185">Reference proteome</keyword>
<keyword id="KW-0813">Transport</keyword>
<protein>
    <recommendedName>
        <fullName evidence="1">V-type ATP synthase subunit D</fullName>
    </recommendedName>
    <alternativeName>
        <fullName evidence="1">V-ATPase subunit D</fullName>
    </alternativeName>
</protein>
<feature type="chain" id="PRO_1000059145" description="V-type ATP synthase subunit D">
    <location>
        <begin position="1"/>
        <end position="209"/>
    </location>
</feature>
<accession>Q2IQ93</accession>
<organism>
    <name type="scientific">Anaeromyxobacter dehalogenans (strain 2CP-C)</name>
    <dbReference type="NCBI Taxonomy" id="290397"/>
    <lineage>
        <taxon>Bacteria</taxon>
        <taxon>Pseudomonadati</taxon>
        <taxon>Myxococcota</taxon>
        <taxon>Myxococcia</taxon>
        <taxon>Myxococcales</taxon>
        <taxon>Cystobacterineae</taxon>
        <taxon>Anaeromyxobacteraceae</taxon>
        <taxon>Anaeromyxobacter</taxon>
    </lineage>
</organism>
<reference key="1">
    <citation type="submission" date="2006-01" db="EMBL/GenBank/DDBJ databases">
        <title>Complete sequence of Anaeromyxobacter dehalogenans 2CP-C.</title>
        <authorList>
            <person name="Copeland A."/>
            <person name="Lucas S."/>
            <person name="Lapidus A."/>
            <person name="Barry K."/>
            <person name="Detter J.C."/>
            <person name="Glavina T."/>
            <person name="Hammon N."/>
            <person name="Israni S."/>
            <person name="Pitluck S."/>
            <person name="Brettin T."/>
            <person name="Bruce D."/>
            <person name="Han C."/>
            <person name="Tapia R."/>
            <person name="Gilna P."/>
            <person name="Kiss H."/>
            <person name="Schmutz J."/>
            <person name="Larimer F."/>
            <person name="Land M."/>
            <person name="Kyrpides N."/>
            <person name="Anderson I."/>
            <person name="Sanford R.A."/>
            <person name="Ritalahti K.M."/>
            <person name="Thomas H.S."/>
            <person name="Kirby J.R."/>
            <person name="Zhulin I.B."/>
            <person name="Loeffler F.E."/>
            <person name="Richardson P."/>
        </authorList>
    </citation>
    <scope>NUCLEOTIDE SEQUENCE [LARGE SCALE GENOMIC DNA]</scope>
    <source>
        <strain>2CP-C</strain>
    </source>
</reference>
<dbReference type="EMBL" id="CP000251">
    <property type="protein sequence ID" value="ABC80978.1"/>
    <property type="molecule type" value="Genomic_DNA"/>
</dbReference>
<dbReference type="RefSeq" id="WP_011420261.1">
    <property type="nucleotide sequence ID" value="NC_007760.1"/>
</dbReference>
<dbReference type="SMR" id="Q2IQ93"/>
<dbReference type="STRING" id="290397.Adeh_1204"/>
<dbReference type="KEGG" id="ade:Adeh_1204"/>
<dbReference type="eggNOG" id="COG1394">
    <property type="taxonomic scope" value="Bacteria"/>
</dbReference>
<dbReference type="HOGENOM" id="CLU_069688_2_1_7"/>
<dbReference type="OrthoDB" id="5525801at2"/>
<dbReference type="Proteomes" id="UP000001935">
    <property type="component" value="Chromosome"/>
</dbReference>
<dbReference type="GO" id="GO:0005524">
    <property type="term" value="F:ATP binding"/>
    <property type="evidence" value="ECO:0007669"/>
    <property type="project" value="UniProtKB-UniRule"/>
</dbReference>
<dbReference type="GO" id="GO:0046933">
    <property type="term" value="F:proton-transporting ATP synthase activity, rotational mechanism"/>
    <property type="evidence" value="ECO:0007669"/>
    <property type="project" value="UniProtKB-UniRule"/>
</dbReference>
<dbReference type="GO" id="GO:0046961">
    <property type="term" value="F:proton-transporting ATPase activity, rotational mechanism"/>
    <property type="evidence" value="ECO:0007669"/>
    <property type="project" value="InterPro"/>
</dbReference>
<dbReference type="GO" id="GO:0042777">
    <property type="term" value="P:proton motive force-driven plasma membrane ATP synthesis"/>
    <property type="evidence" value="ECO:0007669"/>
    <property type="project" value="UniProtKB-UniRule"/>
</dbReference>
<dbReference type="Gene3D" id="1.10.287.3240">
    <property type="match status" value="1"/>
</dbReference>
<dbReference type="HAMAP" id="MF_00271">
    <property type="entry name" value="ATP_synth_D_arch"/>
    <property type="match status" value="1"/>
</dbReference>
<dbReference type="InterPro" id="IPR002699">
    <property type="entry name" value="V_ATPase_D"/>
</dbReference>
<dbReference type="NCBIfam" id="TIGR00309">
    <property type="entry name" value="V_ATPase_subD"/>
    <property type="match status" value="1"/>
</dbReference>
<dbReference type="PANTHER" id="PTHR11671">
    <property type="entry name" value="V-TYPE ATP SYNTHASE SUBUNIT D"/>
    <property type="match status" value="1"/>
</dbReference>
<dbReference type="Pfam" id="PF01813">
    <property type="entry name" value="ATP-synt_D"/>
    <property type="match status" value="1"/>
</dbReference>
<name>VATD_ANADE</name>
<gene>
    <name evidence="1" type="primary">atpD</name>
    <name type="ordered locus">Adeh_1204</name>
</gene>
<comment type="function">
    <text evidence="1">Produces ATP from ADP in the presence of a proton gradient across the membrane.</text>
</comment>
<comment type="similarity">
    <text evidence="1">Belongs to the V-ATPase D subunit family.</text>
</comment>
<proteinExistence type="inferred from homology"/>
<evidence type="ECO:0000255" key="1">
    <source>
        <dbReference type="HAMAP-Rule" id="MF_00271"/>
    </source>
</evidence>
<sequence length="209" mass="22921">MSRAATTRMGLLEVRARRAVAGKGARLLRAKREVLASELWRLVHDVLEGRARLDEALRRAVKALELAKALEGEERLASLALPAARAVPLAVTVRRVWGVPTPSVAAPPLVRAADQRGSSPVSWGPSGAAAARHHEESLEVLLTIASKELHLARLGEEIQETSRRINALEQLVLPALRSEASRIAAALDERDREDAVRLRRFRARHPRPA</sequence>